<proteinExistence type="evidence at transcript level"/>
<accession>P29976</accession>
<accession>Q9SMQ7</accession>
<organism>
    <name type="scientific">Arabidopsis thaliana</name>
    <name type="common">Mouse-ear cress</name>
    <dbReference type="NCBI Taxonomy" id="3702"/>
    <lineage>
        <taxon>Eukaryota</taxon>
        <taxon>Viridiplantae</taxon>
        <taxon>Streptophyta</taxon>
        <taxon>Embryophyta</taxon>
        <taxon>Tracheophyta</taxon>
        <taxon>Spermatophyta</taxon>
        <taxon>Magnoliopsida</taxon>
        <taxon>eudicotyledons</taxon>
        <taxon>Gunneridae</taxon>
        <taxon>Pentapetalae</taxon>
        <taxon>rosids</taxon>
        <taxon>malvids</taxon>
        <taxon>Brassicales</taxon>
        <taxon>Brassicaceae</taxon>
        <taxon>Camelineae</taxon>
        <taxon>Arabidopsis</taxon>
    </lineage>
</organism>
<feature type="transit peptide" description="Chloroplast" evidence="1">
    <location>
        <begin position="1"/>
        <end position="52"/>
    </location>
</feature>
<feature type="chain" id="PRO_0000002298" description="Phospho-2-dehydro-3-deoxyheptonate aldolase 1, chloroplastic">
    <location>
        <begin position="53"/>
        <end position="525"/>
    </location>
</feature>
<feature type="region of interest" description="Disordered" evidence="2">
    <location>
        <begin position="1"/>
        <end position="35"/>
    </location>
</feature>
<feature type="compositionally biased region" description="Polar residues" evidence="2">
    <location>
        <begin position="1"/>
        <end position="13"/>
    </location>
</feature>
<feature type="sequence conflict" description="In Ref. 1; AAA32784." evidence="3" ref="1">
    <original>AP</original>
    <variation>ST</variation>
    <location>
        <begin position="429"/>
        <end position="430"/>
    </location>
</feature>
<gene>
    <name type="primary">DHS1</name>
    <name type="ordered locus">At4g39980</name>
    <name type="ORF">T5J17.150</name>
</gene>
<dbReference type="EC" id="2.5.1.54"/>
<dbReference type="EMBL" id="M74819">
    <property type="protein sequence ID" value="AAA32784.1"/>
    <property type="molecule type" value="mRNA"/>
</dbReference>
<dbReference type="EMBL" id="AL035708">
    <property type="protein sequence ID" value="CAB38911.1"/>
    <property type="molecule type" value="Genomic_DNA"/>
</dbReference>
<dbReference type="EMBL" id="AL161596">
    <property type="protein sequence ID" value="CAB80661.1"/>
    <property type="molecule type" value="Genomic_DNA"/>
</dbReference>
<dbReference type="EMBL" id="CP002687">
    <property type="protein sequence ID" value="AEE87148.1"/>
    <property type="molecule type" value="Genomic_DNA"/>
</dbReference>
<dbReference type="EMBL" id="AY090349">
    <property type="protein sequence ID" value="AAL91255.1"/>
    <property type="molecule type" value="mRNA"/>
</dbReference>
<dbReference type="EMBL" id="AY140052">
    <property type="protein sequence ID" value="AAM98193.1"/>
    <property type="molecule type" value="mRNA"/>
</dbReference>
<dbReference type="EMBL" id="BT000821">
    <property type="protein sequence ID" value="AAN33196.1"/>
    <property type="molecule type" value="mRNA"/>
</dbReference>
<dbReference type="PIR" id="A41370">
    <property type="entry name" value="A41370"/>
</dbReference>
<dbReference type="PIR" id="T06104">
    <property type="entry name" value="T06104"/>
</dbReference>
<dbReference type="RefSeq" id="NP_195708.1">
    <property type="nucleotide sequence ID" value="NM_120162.5"/>
</dbReference>
<dbReference type="SMR" id="P29976"/>
<dbReference type="BioGRID" id="15439">
    <property type="interactions" value="3"/>
</dbReference>
<dbReference type="FunCoup" id="P29976">
    <property type="interactions" value="590"/>
</dbReference>
<dbReference type="IntAct" id="P29976">
    <property type="interactions" value="1"/>
</dbReference>
<dbReference type="STRING" id="3702.P29976"/>
<dbReference type="PaxDb" id="3702-AT4G39980.1"/>
<dbReference type="ProteomicsDB" id="246966"/>
<dbReference type="EnsemblPlants" id="AT4G39980.1">
    <property type="protein sequence ID" value="AT4G39980.1"/>
    <property type="gene ID" value="AT4G39980"/>
</dbReference>
<dbReference type="GeneID" id="830159"/>
<dbReference type="Gramene" id="AT4G39980.1">
    <property type="protein sequence ID" value="AT4G39980.1"/>
    <property type="gene ID" value="AT4G39980"/>
</dbReference>
<dbReference type="KEGG" id="ath:AT4G39980"/>
<dbReference type="Araport" id="AT4G39980"/>
<dbReference type="TAIR" id="AT4G39980">
    <property type="gene designation" value="DHS1"/>
</dbReference>
<dbReference type="eggNOG" id="ENOG502QPP7">
    <property type="taxonomic scope" value="Eukaryota"/>
</dbReference>
<dbReference type="HOGENOM" id="CLU_026885_0_1_1"/>
<dbReference type="InParanoid" id="P29976"/>
<dbReference type="OMA" id="HRQSNRQ"/>
<dbReference type="PhylomeDB" id="P29976"/>
<dbReference type="BRENDA" id="2.5.1.54">
    <property type="organism ID" value="399"/>
</dbReference>
<dbReference type="UniPathway" id="UPA00053">
    <property type="reaction ID" value="UER00084"/>
</dbReference>
<dbReference type="PRO" id="PR:P29976"/>
<dbReference type="Proteomes" id="UP000006548">
    <property type="component" value="Chromosome 4"/>
</dbReference>
<dbReference type="ExpressionAtlas" id="P29976">
    <property type="expression patterns" value="baseline and differential"/>
</dbReference>
<dbReference type="GO" id="GO:0009507">
    <property type="term" value="C:chloroplast"/>
    <property type="evidence" value="ECO:0000304"/>
    <property type="project" value="TAIR"/>
</dbReference>
<dbReference type="GO" id="GO:0005739">
    <property type="term" value="C:mitochondrion"/>
    <property type="evidence" value="ECO:0007005"/>
    <property type="project" value="TAIR"/>
</dbReference>
<dbReference type="GO" id="GO:0003849">
    <property type="term" value="F:3-deoxy-7-phosphoheptulonate synthase activity"/>
    <property type="evidence" value="ECO:0000314"/>
    <property type="project" value="TAIR"/>
</dbReference>
<dbReference type="GO" id="GO:0008652">
    <property type="term" value="P:amino acid biosynthetic process"/>
    <property type="evidence" value="ECO:0007669"/>
    <property type="project" value="UniProtKB-KW"/>
</dbReference>
<dbReference type="GO" id="GO:0009073">
    <property type="term" value="P:aromatic amino acid family biosynthetic process"/>
    <property type="evidence" value="ECO:0000304"/>
    <property type="project" value="TAIR"/>
</dbReference>
<dbReference type="GO" id="GO:0009423">
    <property type="term" value="P:chorismate biosynthetic process"/>
    <property type="evidence" value="ECO:0000314"/>
    <property type="project" value="TAIR"/>
</dbReference>
<dbReference type="GO" id="GO:0009611">
    <property type="term" value="P:response to wounding"/>
    <property type="evidence" value="ECO:0000270"/>
    <property type="project" value="TAIR"/>
</dbReference>
<dbReference type="FunFam" id="3.20.20.70:FF:000128">
    <property type="entry name" value="Phospho-2-dehydro-3-deoxyheptonate aldolase"/>
    <property type="match status" value="1"/>
</dbReference>
<dbReference type="Gene3D" id="3.20.20.70">
    <property type="entry name" value="Aldolase class I"/>
    <property type="match status" value="1"/>
</dbReference>
<dbReference type="InterPro" id="IPR013785">
    <property type="entry name" value="Aldolase_TIM"/>
</dbReference>
<dbReference type="InterPro" id="IPR002480">
    <property type="entry name" value="DAHP_synth_2"/>
</dbReference>
<dbReference type="NCBIfam" id="TIGR01358">
    <property type="entry name" value="DAHP_synth_II"/>
    <property type="match status" value="1"/>
</dbReference>
<dbReference type="PANTHER" id="PTHR21337">
    <property type="entry name" value="PHOSPHO-2-DEHYDRO-3-DEOXYHEPTONATE ALDOLASE 1, 2"/>
    <property type="match status" value="1"/>
</dbReference>
<dbReference type="PANTHER" id="PTHR21337:SF32">
    <property type="entry name" value="PHOSPHO-2-DEHYDRO-3-DEOXYHEPTONATE ALDOLASE 1, CHLOROPLASTIC"/>
    <property type="match status" value="1"/>
</dbReference>
<dbReference type="Pfam" id="PF01474">
    <property type="entry name" value="DAHP_synth_2"/>
    <property type="match status" value="1"/>
</dbReference>
<dbReference type="SUPFAM" id="SSF51569">
    <property type="entry name" value="Aldolase"/>
    <property type="match status" value="1"/>
</dbReference>
<evidence type="ECO:0000255" key="1"/>
<evidence type="ECO:0000256" key="2">
    <source>
        <dbReference type="SAM" id="MobiDB-lite"/>
    </source>
</evidence>
<evidence type="ECO:0000305" key="3"/>
<keyword id="KW-0028">Amino-acid biosynthesis</keyword>
<keyword id="KW-0057">Aromatic amino acid biosynthesis</keyword>
<keyword id="KW-0150">Chloroplast</keyword>
<keyword id="KW-0934">Plastid</keyword>
<keyword id="KW-1185">Reference proteome</keyword>
<keyword id="KW-0808">Transferase</keyword>
<keyword id="KW-0809">Transit peptide</keyword>
<sequence length="525" mass="57979">MALSNASSLSTRSIYGGDLSHRPSNRQSSFTFHPAVNTKPKSVNLVTAVHAAEPARNAVSVKESVASSSSGALKWTPESWKLKKALQLPDYPNANELESVLKTIEAFPPIVFAGEARNLEERLADAAVGKAFLLQGGDCAESFKEFNATNIRDTFRVLLQMSIVLTFGGQVPVIKVGRMAGQFAKPRSDAFEEKDGVKLPSYKGDNINGDTFDEKSRIPDPNRMIRAYTQSAATLNLLRAFATGGYAAIQRVTQWNLDFVEQSEQADRYQELANRVDEALGFMSACGLGTDHPLMTTTDFYTSHECLLLPYEQSLTRLDSTSGLYYDCSAHMVWCGERTRQLDGAHVEFLRGIANPLGIKVSNKMDPFELVKLVEILNPNNKPGRITVIVRMGAENMRVKLPHLIRAVRRSGQIVTWVCDPMHGNTIKAPCGLKTRAFDSILAEVRAFLDVHEQEGSHAGGIHLEMTGQNVTECIGGSRTVTYDDLSSRYHTHCDPRLNASQSLELAFIVAERLRKRRTGSQRVS</sequence>
<name>AROF_ARATH</name>
<comment type="catalytic activity">
    <reaction>
        <text>D-erythrose 4-phosphate + phosphoenolpyruvate + H2O = 7-phospho-2-dehydro-3-deoxy-D-arabino-heptonate + phosphate</text>
        <dbReference type="Rhea" id="RHEA:14717"/>
        <dbReference type="ChEBI" id="CHEBI:15377"/>
        <dbReference type="ChEBI" id="CHEBI:16897"/>
        <dbReference type="ChEBI" id="CHEBI:43474"/>
        <dbReference type="ChEBI" id="CHEBI:58394"/>
        <dbReference type="ChEBI" id="CHEBI:58702"/>
        <dbReference type="EC" id="2.5.1.54"/>
    </reaction>
</comment>
<comment type="pathway">
    <text>Metabolic intermediate biosynthesis; chorismate biosynthesis; chorismate from D-erythrose 4-phosphate and phosphoenolpyruvate: step 1/7.</text>
</comment>
<comment type="subcellular location">
    <subcellularLocation>
        <location>Plastid</location>
        <location>Chloroplast</location>
    </subcellularLocation>
</comment>
<comment type="induction">
    <text>By pathogen infection and wounding.</text>
</comment>
<comment type="similarity">
    <text evidence="3">Belongs to the class-II DAHP synthase family.</text>
</comment>
<protein>
    <recommendedName>
        <fullName>Phospho-2-dehydro-3-deoxyheptonate aldolase 1, chloroplastic</fullName>
        <ecNumber>2.5.1.54</ecNumber>
    </recommendedName>
    <alternativeName>
        <fullName>3-deoxy-D-arabino-heptulosonate 7-phosphate synthase 1</fullName>
    </alternativeName>
    <alternativeName>
        <fullName>DAHP synthase 1</fullName>
    </alternativeName>
    <alternativeName>
        <fullName>Phospho-2-keto-3-deoxyheptonate aldolase 1</fullName>
    </alternativeName>
</protein>
<reference key="1">
    <citation type="journal article" date="1991" name="Proc. Natl. Acad. Sci. U.S.A.">
        <title>Differential induction of 3-deoxy-D-arabino-heptulosonate 7-phosphate synthase genes in Arabidopsis thaliana by wounding and pathogenic attack.</title>
        <authorList>
            <person name="Keith B."/>
            <person name="Dong X.N."/>
            <person name="Ausubel F.M."/>
            <person name="Fink G.R."/>
        </authorList>
    </citation>
    <scope>NUCLEOTIDE SEQUENCE [MRNA]</scope>
</reference>
<reference key="2">
    <citation type="journal article" date="1999" name="Nature">
        <title>Sequence and analysis of chromosome 4 of the plant Arabidopsis thaliana.</title>
        <authorList>
            <person name="Mayer K.F.X."/>
            <person name="Schueller C."/>
            <person name="Wambutt R."/>
            <person name="Murphy G."/>
            <person name="Volckaert G."/>
            <person name="Pohl T."/>
            <person name="Duesterhoeft A."/>
            <person name="Stiekema W."/>
            <person name="Entian K.-D."/>
            <person name="Terryn N."/>
            <person name="Harris B."/>
            <person name="Ansorge W."/>
            <person name="Brandt P."/>
            <person name="Grivell L.A."/>
            <person name="Rieger M."/>
            <person name="Weichselgartner M."/>
            <person name="de Simone V."/>
            <person name="Obermaier B."/>
            <person name="Mache R."/>
            <person name="Mueller M."/>
            <person name="Kreis M."/>
            <person name="Delseny M."/>
            <person name="Puigdomenech P."/>
            <person name="Watson M."/>
            <person name="Schmidtheini T."/>
            <person name="Reichert B."/>
            <person name="Portetelle D."/>
            <person name="Perez-Alonso M."/>
            <person name="Boutry M."/>
            <person name="Bancroft I."/>
            <person name="Vos P."/>
            <person name="Hoheisel J."/>
            <person name="Zimmermann W."/>
            <person name="Wedler H."/>
            <person name="Ridley P."/>
            <person name="Langham S.-A."/>
            <person name="McCullagh B."/>
            <person name="Bilham L."/>
            <person name="Robben J."/>
            <person name="van der Schueren J."/>
            <person name="Grymonprez B."/>
            <person name="Chuang Y.-J."/>
            <person name="Vandenbussche F."/>
            <person name="Braeken M."/>
            <person name="Weltjens I."/>
            <person name="Voet M."/>
            <person name="Bastiaens I."/>
            <person name="Aert R."/>
            <person name="Defoor E."/>
            <person name="Weitzenegger T."/>
            <person name="Bothe G."/>
            <person name="Ramsperger U."/>
            <person name="Hilbert H."/>
            <person name="Braun M."/>
            <person name="Holzer E."/>
            <person name="Brandt A."/>
            <person name="Peters S."/>
            <person name="van Staveren M."/>
            <person name="Dirkse W."/>
            <person name="Mooijman P."/>
            <person name="Klein Lankhorst R."/>
            <person name="Rose M."/>
            <person name="Hauf J."/>
            <person name="Koetter P."/>
            <person name="Berneiser S."/>
            <person name="Hempel S."/>
            <person name="Feldpausch M."/>
            <person name="Lamberth S."/>
            <person name="Van den Daele H."/>
            <person name="De Keyser A."/>
            <person name="Buysshaert C."/>
            <person name="Gielen J."/>
            <person name="Villarroel R."/>
            <person name="De Clercq R."/>
            <person name="van Montagu M."/>
            <person name="Rogers J."/>
            <person name="Cronin A."/>
            <person name="Quail M.A."/>
            <person name="Bray-Allen S."/>
            <person name="Clark L."/>
            <person name="Doggett J."/>
            <person name="Hall S."/>
            <person name="Kay M."/>
            <person name="Lennard N."/>
            <person name="McLay K."/>
            <person name="Mayes R."/>
            <person name="Pettett A."/>
            <person name="Rajandream M.A."/>
            <person name="Lyne M."/>
            <person name="Benes V."/>
            <person name="Rechmann S."/>
            <person name="Borkova D."/>
            <person name="Bloecker H."/>
            <person name="Scharfe M."/>
            <person name="Grimm M."/>
            <person name="Loehnert T.-H."/>
            <person name="Dose S."/>
            <person name="de Haan M."/>
            <person name="Maarse A.C."/>
            <person name="Schaefer M."/>
            <person name="Mueller-Auer S."/>
            <person name="Gabel C."/>
            <person name="Fuchs M."/>
            <person name="Fartmann B."/>
            <person name="Granderath K."/>
            <person name="Dauner D."/>
            <person name="Herzl A."/>
            <person name="Neumann S."/>
            <person name="Argiriou A."/>
            <person name="Vitale D."/>
            <person name="Liguori R."/>
            <person name="Piravandi E."/>
            <person name="Massenet O."/>
            <person name="Quigley F."/>
            <person name="Clabauld G."/>
            <person name="Muendlein A."/>
            <person name="Felber R."/>
            <person name="Schnabl S."/>
            <person name="Hiller R."/>
            <person name="Schmidt W."/>
            <person name="Lecharny A."/>
            <person name="Aubourg S."/>
            <person name="Chefdor F."/>
            <person name="Cooke R."/>
            <person name="Berger C."/>
            <person name="Monfort A."/>
            <person name="Casacuberta E."/>
            <person name="Gibbons T."/>
            <person name="Weber N."/>
            <person name="Vandenbol M."/>
            <person name="Bargues M."/>
            <person name="Terol J."/>
            <person name="Torres A."/>
            <person name="Perez-Perez A."/>
            <person name="Purnelle B."/>
            <person name="Bent E."/>
            <person name="Johnson S."/>
            <person name="Tacon D."/>
            <person name="Jesse T."/>
            <person name="Heijnen L."/>
            <person name="Schwarz S."/>
            <person name="Scholler P."/>
            <person name="Heber S."/>
            <person name="Francs P."/>
            <person name="Bielke C."/>
            <person name="Frishman D."/>
            <person name="Haase D."/>
            <person name="Lemcke K."/>
            <person name="Mewes H.-W."/>
            <person name="Stocker S."/>
            <person name="Zaccaria P."/>
            <person name="Bevan M."/>
            <person name="Wilson R.K."/>
            <person name="de la Bastide M."/>
            <person name="Habermann K."/>
            <person name="Parnell L."/>
            <person name="Dedhia N."/>
            <person name="Gnoj L."/>
            <person name="Schutz K."/>
            <person name="Huang E."/>
            <person name="Spiegel L."/>
            <person name="Sekhon M."/>
            <person name="Murray J."/>
            <person name="Sheet P."/>
            <person name="Cordes M."/>
            <person name="Abu-Threideh J."/>
            <person name="Stoneking T."/>
            <person name="Kalicki J."/>
            <person name="Graves T."/>
            <person name="Harmon G."/>
            <person name="Edwards J."/>
            <person name="Latreille P."/>
            <person name="Courtney L."/>
            <person name="Cloud J."/>
            <person name="Abbott A."/>
            <person name="Scott K."/>
            <person name="Johnson D."/>
            <person name="Minx P."/>
            <person name="Bentley D."/>
            <person name="Fulton B."/>
            <person name="Miller N."/>
            <person name="Greco T."/>
            <person name="Kemp K."/>
            <person name="Kramer J."/>
            <person name="Fulton L."/>
            <person name="Mardis E."/>
            <person name="Dante M."/>
            <person name="Pepin K."/>
            <person name="Hillier L.W."/>
            <person name="Nelson J."/>
            <person name="Spieth J."/>
            <person name="Ryan E."/>
            <person name="Andrews S."/>
            <person name="Geisel C."/>
            <person name="Layman D."/>
            <person name="Du H."/>
            <person name="Ali J."/>
            <person name="Berghoff A."/>
            <person name="Jones K."/>
            <person name="Drone K."/>
            <person name="Cotton M."/>
            <person name="Joshu C."/>
            <person name="Antonoiu B."/>
            <person name="Zidanic M."/>
            <person name="Strong C."/>
            <person name="Sun H."/>
            <person name="Lamar B."/>
            <person name="Yordan C."/>
            <person name="Ma P."/>
            <person name="Zhong J."/>
            <person name="Preston R."/>
            <person name="Vil D."/>
            <person name="Shekher M."/>
            <person name="Matero A."/>
            <person name="Shah R."/>
            <person name="Swaby I.K."/>
            <person name="O'Shaughnessy A."/>
            <person name="Rodriguez M."/>
            <person name="Hoffman J."/>
            <person name="Till S."/>
            <person name="Granat S."/>
            <person name="Shohdy N."/>
            <person name="Hasegawa A."/>
            <person name="Hameed A."/>
            <person name="Lodhi M."/>
            <person name="Johnson A."/>
            <person name="Chen E."/>
            <person name="Marra M.A."/>
            <person name="Martienssen R."/>
            <person name="McCombie W.R."/>
        </authorList>
    </citation>
    <scope>NUCLEOTIDE SEQUENCE [LARGE SCALE GENOMIC DNA]</scope>
    <source>
        <strain>cv. Columbia</strain>
    </source>
</reference>
<reference key="3">
    <citation type="journal article" date="2017" name="Plant J.">
        <title>Araport11: a complete reannotation of the Arabidopsis thaliana reference genome.</title>
        <authorList>
            <person name="Cheng C.Y."/>
            <person name="Krishnakumar V."/>
            <person name="Chan A.P."/>
            <person name="Thibaud-Nissen F."/>
            <person name="Schobel S."/>
            <person name="Town C.D."/>
        </authorList>
    </citation>
    <scope>GENOME REANNOTATION</scope>
    <source>
        <strain>cv. Columbia</strain>
    </source>
</reference>
<reference key="4">
    <citation type="journal article" date="2003" name="Science">
        <title>Empirical analysis of transcriptional activity in the Arabidopsis genome.</title>
        <authorList>
            <person name="Yamada K."/>
            <person name="Lim J."/>
            <person name="Dale J.M."/>
            <person name="Chen H."/>
            <person name="Shinn P."/>
            <person name="Palm C.J."/>
            <person name="Southwick A.M."/>
            <person name="Wu H.C."/>
            <person name="Kim C.J."/>
            <person name="Nguyen M."/>
            <person name="Pham P.K."/>
            <person name="Cheuk R.F."/>
            <person name="Karlin-Newmann G."/>
            <person name="Liu S.X."/>
            <person name="Lam B."/>
            <person name="Sakano H."/>
            <person name="Wu T."/>
            <person name="Yu G."/>
            <person name="Miranda M."/>
            <person name="Quach H.L."/>
            <person name="Tripp M."/>
            <person name="Chang C.H."/>
            <person name="Lee J.M."/>
            <person name="Toriumi M.J."/>
            <person name="Chan M.M."/>
            <person name="Tang C.C."/>
            <person name="Onodera C.S."/>
            <person name="Deng J.M."/>
            <person name="Akiyama K."/>
            <person name="Ansari Y."/>
            <person name="Arakawa T."/>
            <person name="Banh J."/>
            <person name="Banno F."/>
            <person name="Bowser L."/>
            <person name="Brooks S.Y."/>
            <person name="Carninci P."/>
            <person name="Chao Q."/>
            <person name="Choy N."/>
            <person name="Enju A."/>
            <person name="Goldsmith A.D."/>
            <person name="Gurjal M."/>
            <person name="Hansen N.F."/>
            <person name="Hayashizaki Y."/>
            <person name="Johnson-Hopson C."/>
            <person name="Hsuan V.W."/>
            <person name="Iida K."/>
            <person name="Karnes M."/>
            <person name="Khan S."/>
            <person name="Koesema E."/>
            <person name="Ishida J."/>
            <person name="Jiang P.X."/>
            <person name="Jones T."/>
            <person name="Kawai J."/>
            <person name="Kamiya A."/>
            <person name="Meyers C."/>
            <person name="Nakajima M."/>
            <person name="Narusaka M."/>
            <person name="Seki M."/>
            <person name="Sakurai T."/>
            <person name="Satou M."/>
            <person name="Tamse R."/>
            <person name="Vaysberg M."/>
            <person name="Wallender E.K."/>
            <person name="Wong C."/>
            <person name="Yamamura Y."/>
            <person name="Yuan S."/>
            <person name="Shinozaki K."/>
            <person name="Davis R.W."/>
            <person name="Theologis A."/>
            <person name="Ecker J.R."/>
        </authorList>
    </citation>
    <scope>NUCLEOTIDE SEQUENCE [LARGE SCALE MRNA]</scope>
    <source>
        <strain>cv. Columbia</strain>
    </source>
</reference>